<organism>
    <name type="scientific">Bacteriophage H30</name>
    <dbReference type="NCBI Taxonomy" id="12371"/>
    <lineage>
        <taxon>Viruses</taxon>
    </lineage>
</organism>
<name>STXB_BPH30</name>
<gene>
    <name type="primary">stxB</name>
</gene>
<reference key="1">
    <citation type="journal article" date="1988" name="Gene">
        <title>The primary structure of the operons coding for Shigella dysenteriae toxin and temperature phage H30 shiga-like toxin.</title>
        <authorList>
            <person name="Kozlov Y.V."/>
            <person name="Kabishev A.A."/>
            <person name="Lukyanov E.V."/>
            <person name="Bayev A.A."/>
        </authorList>
    </citation>
    <scope>NUCLEOTIDE SEQUENCE [GENOMIC DNA]</scope>
</reference>
<reference key="2">
    <citation type="submission" date="1999-09" db="PDB data bank">
        <title>Mutated Shiga-like toxin B subunit (D17e/w34a) complexed with receptor Gb3 analogue.</title>
        <authorList>
            <person name="Ling H."/>
            <person name="Brunton J.L."/>
            <person name="Read R.J."/>
        </authorList>
    </citation>
    <scope>X-RAY CRYSTALLOGRAPHY (2.0 ANGSTROMS) OF 21-89 IN COMPLEX WITH RECEPTOR GB3 ANALOG</scope>
</reference>
<reference key="3">
    <citation type="submission" date="2005-10" db="PDB data bank">
        <title>Extensive cross-linking of the Shiga-like toxin 1 B subunit by a bivalent ligand.</title>
        <authorList>
            <person name="Fraser M.E."/>
            <person name="Fujinaga M."/>
            <person name="Cherney M.M."/>
            <person name="Melton-Celsa A.R."/>
            <person name="Dodd R.B."/>
            <person name="Read R.J."/>
        </authorList>
    </citation>
    <scope>X-RAY CRYSTALLOGRAPHY (2.94 ANGSTROMS) OF 21-89</scope>
</reference>
<proteinExistence type="evidence at protein level"/>
<organismHost>
    <name type="scientific">Escherichia coli</name>
    <dbReference type="NCBI Taxonomy" id="562"/>
</organismHost>
<feature type="signal peptide" evidence="1">
    <location>
        <begin position="1"/>
        <end position="20"/>
    </location>
</feature>
<feature type="chain" id="PRO_0000030793" description="Shiga-like toxin 1 subunit B">
    <location>
        <begin position="21"/>
        <end position="89"/>
    </location>
</feature>
<feature type="disulfide bond">
    <location>
        <begin position="24"/>
        <end position="77"/>
    </location>
</feature>
<feature type="strand" evidence="4">
    <location>
        <begin position="23"/>
        <end position="34"/>
    </location>
</feature>
<feature type="strand" evidence="4">
    <location>
        <begin position="40"/>
        <end position="44"/>
    </location>
</feature>
<feature type="strand" evidence="4">
    <location>
        <begin position="47"/>
        <end position="51"/>
    </location>
</feature>
<feature type="helix" evidence="4">
    <location>
        <begin position="56"/>
        <end position="66"/>
    </location>
</feature>
<feature type="strand" evidence="4">
    <location>
        <begin position="69"/>
        <end position="73"/>
    </location>
</feature>
<feature type="strand" evidence="4">
    <location>
        <begin position="85"/>
        <end position="89"/>
    </location>
</feature>
<evidence type="ECO:0000250" key="1"/>
<evidence type="ECO:0000269" key="2">
    <source ref="2"/>
</evidence>
<evidence type="ECO:0000305" key="3"/>
<evidence type="ECO:0007829" key="4">
    <source>
        <dbReference type="PDB" id="1D1K"/>
    </source>
</evidence>
<keyword id="KW-0002">3D-structure</keyword>
<keyword id="KW-1015">Disulfide bond</keyword>
<keyword id="KW-1254">Modulation of host virulence by virus</keyword>
<keyword id="KW-0964">Secreted</keyword>
<keyword id="KW-0732">Signal</keyword>
<keyword id="KW-0800">Toxin</keyword>
<keyword id="KW-1255">Viral exotoxin</keyword>
<keyword id="KW-0843">Virulence</keyword>
<protein>
    <recommendedName>
        <fullName>Shiga-like toxin 1 subunit B</fullName>
        <shortName>SLT-1 B subunit</shortName>
        <shortName>SLT-1b</shortName>
        <shortName>SLT-Ib</shortName>
    </recommendedName>
    <alternativeName>
        <fullName>Verocytotoxin 1 subunit B</fullName>
        <shortName>Verotoxin 1 subunit B</shortName>
    </alternativeName>
</protein>
<accession>P69178</accession>
<accession>P08027</accession>
<sequence>MKKTLLIAASLSFFSASALATPDCVTGKVEYTKYNDDDTFTVKVGDKELFTNRWNLQSLLLSAQITGMTVTIKTNACHNGGGFSEVIFR</sequence>
<dbReference type="EMBL" id="M23980">
    <property type="protein sequence ID" value="AAA72733.1"/>
    <property type="molecule type" value="Genomic_DNA"/>
</dbReference>
<dbReference type="PDB" id="1D1K">
    <property type="method" value="X-ray"/>
    <property type="resolution" value="2.00 A"/>
    <property type="chains" value="A/B/C/D/E=21-89"/>
</dbReference>
<dbReference type="PDB" id="2C5C">
    <property type="method" value="X-ray"/>
    <property type="resolution" value="2.94 A"/>
    <property type="chains" value="A/B/C/D/E/F/G/H/I/J=21-89"/>
</dbReference>
<dbReference type="PDBsum" id="1D1K"/>
<dbReference type="PDBsum" id="2C5C"/>
<dbReference type="SMR" id="P69178"/>
<dbReference type="DrugBank" id="DB02379">
    <property type="generic name" value="Beta-D-Glucose"/>
</dbReference>
<dbReference type="DrugBank" id="DB08501">
    <property type="generic name" value="DIETHYL PROPANE-1,3-DIYLBISCARBAMATE"/>
</dbReference>
<dbReference type="DrugBank" id="DB02856">
    <property type="generic name" value="Ethyl N-methylcarbamate"/>
</dbReference>
<dbReference type="DrugBank" id="DB03919">
    <property type="generic name" value="Ethyl-Carbamic Acid Methyl Ester"/>
</dbReference>
<dbReference type="TCDB" id="1.C.54.1.1">
    <property type="family name" value="the shiga toxin b-chain (st-b) family"/>
</dbReference>
<dbReference type="UniLectin" id="P69178"/>
<dbReference type="EvolutionaryTrace" id="P69178"/>
<dbReference type="GO" id="GO:0005576">
    <property type="term" value="C:extracellular region"/>
    <property type="evidence" value="ECO:0007669"/>
    <property type="project" value="UniProtKB-SubCell"/>
</dbReference>
<dbReference type="GO" id="GO:0090729">
    <property type="term" value="F:toxin activity"/>
    <property type="evidence" value="ECO:0007669"/>
    <property type="project" value="UniProtKB-KW"/>
</dbReference>
<dbReference type="GO" id="GO:0019836">
    <property type="term" value="P:symbiont-mediated hemolysis of host erythrocyte"/>
    <property type="evidence" value="ECO:0007669"/>
    <property type="project" value="InterPro"/>
</dbReference>
<dbReference type="GO" id="GO:0098676">
    <property type="term" value="P:symbiont-mediated modulation of host virulence"/>
    <property type="evidence" value="ECO:0007669"/>
    <property type="project" value="UniProtKB-KW"/>
</dbReference>
<dbReference type="FunFam" id="2.40.50.70:FF:000001">
    <property type="entry name" value="Shiga toxin 1 subunit B"/>
    <property type="match status" value="1"/>
</dbReference>
<dbReference type="Gene3D" id="2.40.50.70">
    <property type="match status" value="1"/>
</dbReference>
<dbReference type="InterPro" id="IPR008992">
    <property type="entry name" value="Enterotoxin"/>
</dbReference>
<dbReference type="InterPro" id="IPR003189">
    <property type="entry name" value="SLT_beta"/>
</dbReference>
<dbReference type="NCBIfam" id="NF041697">
    <property type="entry name" value="Shig_StxB_1a"/>
    <property type="match status" value="1"/>
</dbReference>
<dbReference type="NCBIfam" id="NF033659">
    <property type="entry name" value="Shiga_Stx1B"/>
    <property type="match status" value="1"/>
</dbReference>
<dbReference type="Pfam" id="PF02258">
    <property type="entry name" value="SLT_beta"/>
    <property type="match status" value="1"/>
</dbReference>
<dbReference type="SUPFAM" id="SSF50203">
    <property type="entry name" value="Bacterial enterotoxins"/>
    <property type="match status" value="1"/>
</dbReference>
<comment type="function">
    <text>The B subunit is responsible for the binding of the holotoxin to specific receptors on the target cell surface, such as globotriaosylceramide (Gb3) in human intestinal microvilli.</text>
</comment>
<comment type="subunit">
    <text evidence="2">Shiga-like toxin contains a single subunit A and five copies of subunit B.</text>
</comment>
<comment type="subcellular location">
    <subcellularLocation>
        <location>Secreted</location>
    </subcellularLocation>
</comment>
<comment type="domain">
    <text evidence="1">There are three Gb3-binding sites in each subunit B monomer, allowing for a tighter binding to the target cell. Binding sites 1 and 2 have higher binding affinities than site 3 (By similarity).</text>
</comment>
<comment type="similarity">
    <text evidence="3">Belongs to the stxB family.</text>
</comment>